<proteinExistence type="inferred from homology"/>
<feature type="chain" id="PRO_0000406857" description="Major DNA-binding protein">
    <location>
        <begin position="1"/>
        <end position="1188"/>
    </location>
</feature>
<feature type="region of interest" description="Disordered" evidence="2">
    <location>
        <begin position="1145"/>
        <end position="1175"/>
    </location>
</feature>
<feature type="region of interest" description="Required for nuclear localization" evidence="1">
    <location>
        <begin position="1166"/>
        <end position="1188"/>
    </location>
</feature>
<feature type="short sequence motif" description="Required for filament formation" evidence="1">
    <location>
        <begin position="838"/>
        <end position="839"/>
    </location>
</feature>
<protein>
    <recommendedName>
        <fullName evidence="1">Major DNA-binding protein</fullName>
    </recommendedName>
</protein>
<sequence length="1188" mass="127868">MESGGVETTRQGKTESLQYAVGPMAYVYARSNLTIDPEEWGLLCAKSSDQPSTAVAPLIPGLTVEEAFNTSIAAIIATKSSGMVGGAASAILSPCHFSPSVYVFYGGERINATSLAPGLTALCDEARTKFGFSSPPPGGPVSNAKETSGETICAALDMDPETTMLYLVVAEPFCEAVYMCNTFLHFGGADSVYINSEFVRRVPIYPVQMYMPDIALRLCRNPFDTNSRNIGEGCAYPKPLYNKSLNRVLHGAVLAPQGQSLRTRDLEAVARAATAVAFDGNFEGCVLAADKTFTQPATPQAKSAAQKPQADVERRAACSLAADLALTTRVSVSCAPYKFEGNASAPYCQWPMFCDAKTPDERAAALSKFMAELAGIVGAGFFAVNSPLYASEVVDGGAAADPGDKHASSNLTRFFFACGLHTLGCPTVDYAGNRVSDGTGDCALASASGFEYGPEHLAYACGFSPELTARALFYLERCSRYQLGADCRGGANTLKFVAAETTMAAECRWCTETTRQYCVRHTLHRLRSRLPTPRAPRRGPMAVFGAVDAEYTDCDQLGNFAPYSHMKRAGEGDSARNVMNDTYRGLCGRVMQFLVSEGLVRADTGEDARNIQSAKDLCDTYDRISNMVDEECAKFIAALSGARGYHYKEHLASSAHTFAVSLNPYSTSFCPMLSHLVTQTKSIILQDLILSQVPSTFDKGQPETKMFRSAAMPTLRSAFMGMLDKGFVSGRQEPVVVSASSVTAPDTSVPSTEKSVAQYEYSLTRGQVLKLKEFKVKNRIVFNGFEGRRGGVRMQGMADSFSRPASVKHINILGGPLGFLLKRYHEMIFGPENNVFQFWNKVIGGTMPMSHLTPEIRKTLNYIRRVSKAYAESNYVKAQPQTILELANFMVTNKILEYCGHGGTNGSFYISTPSAAVMSATRNKDPSAELAWLPAVANPTTKNLTEAAEKSIASEPEKNWVSTSMVTNACRLVMGTKPIIGLGIMVSKYIGQQSSTTVFQAGNWSGFMGASGIQSVNAGLSGDTTRKCMLACKRTGALIKAGPSSSFTESSLAGQVRSMVEAGCTPHAIYAVALRVLGEGLRDVTTDTWVAIVEDRFLIEALEELHAQIAASTPNGWTHEAAMAELNKHGNEEVATDGEMLNFDCDDDDADKDAPHGAKSDVPNGDDEDVFAGPSAKKRTLATEILFC</sequence>
<gene>
    <name evidence="1" type="primary">DBP</name>
    <name type="synonym">UL29</name>
</gene>
<name>DNBI_PSHV1</name>
<comment type="function">
    <text evidence="1">Plays several crucial roles in viral infection. Participates in the opening of the viral DNA origin to initiate replication by interacting with the origin-binding protein. May disrupt loops, hairpins and other secondary structures present on ssDNA to reduce and eliminate pausing of viral DNA polymerase at specific sites during elongation. Promotes viral DNA recombination by performing strand-transfer, characterized by the ability to transfer a DNA strand from a linear duplex to a complementary single-stranded DNA circle. Can also catalyze the renaturation of complementary single strands. Additionally, reorganizes the host cell nucleus, leading to the formation of prereplicative sites and replication compartments. This process is driven by the protein which can form double-helical filaments in the absence of DNA.</text>
</comment>
<comment type="subunit">
    <text evidence="1">Homooligomers. Forms double-helical filaments necessary for the formation of replication compartments within the host nucleus. Interacts with the origin-binding protein. Interacts with the helicase primase complex; this interaction stimulates primer synthesis activity of the helicase-primase complex. Interacts with the DNA polymerase. Interacts with the alkaline exonuclease; this interaction increases its nuclease processivity.</text>
</comment>
<comment type="subcellular location">
    <subcellularLocation>
        <location evidence="1">Host nucleus</location>
    </subcellularLocation>
    <text evidence="1">In the absence of DNA replication, found in the nuclear framework-associated structures (prereplicative sites). As viral DNA replication proceeds, it migrates to globular intranuclear structures (replication compartments).</text>
</comment>
<comment type="similarity">
    <text evidence="1">Belongs to the herpesviridae major DNA-binding protein family.</text>
</comment>
<accession>Q6UDK2</accession>
<dbReference type="EMBL" id="AY372243">
    <property type="protein sequence ID" value="AAQ73708.1"/>
    <property type="molecule type" value="Genomic_DNA"/>
</dbReference>
<dbReference type="RefSeq" id="NP_944402.1">
    <property type="nucleotide sequence ID" value="NC_005264.1"/>
</dbReference>
<dbReference type="SMR" id="Q6UDK2"/>
<dbReference type="GeneID" id="2656962"/>
<dbReference type="KEGG" id="vg:2656962"/>
<dbReference type="Proteomes" id="UP000006840">
    <property type="component" value="Segment"/>
</dbReference>
<dbReference type="GO" id="GO:0042025">
    <property type="term" value="C:host cell nucleus"/>
    <property type="evidence" value="ECO:0007669"/>
    <property type="project" value="UniProtKB-SubCell"/>
</dbReference>
<dbReference type="GO" id="GO:0003697">
    <property type="term" value="F:single-stranded DNA binding"/>
    <property type="evidence" value="ECO:0007669"/>
    <property type="project" value="InterPro"/>
</dbReference>
<dbReference type="GO" id="GO:0006260">
    <property type="term" value="P:DNA replication"/>
    <property type="evidence" value="ECO:0007669"/>
    <property type="project" value="UniProtKB-KW"/>
</dbReference>
<dbReference type="Gene3D" id="1.10.150.560">
    <property type="match status" value="1"/>
</dbReference>
<dbReference type="Gene3D" id="1.20.190.40">
    <property type="entry name" value="Viral ssDNA binding protein, head domain"/>
    <property type="match status" value="2"/>
</dbReference>
<dbReference type="HAMAP" id="MF_04007">
    <property type="entry name" value="HSV_DNBI"/>
    <property type="match status" value="1"/>
</dbReference>
<dbReference type="InterPro" id="IPR035989">
    <property type="entry name" value="DBP_sf"/>
</dbReference>
<dbReference type="InterPro" id="IPR043031">
    <property type="entry name" value="Viral_ssDBP_head"/>
</dbReference>
<dbReference type="InterPro" id="IPR000635">
    <property type="entry name" value="Viral_ssDNA-bd"/>
</dbReference>
<dbReference type="Pfam" id="PF00747">
    <property type="entry name" value="Viral_DNA_bp"/>
    <property type="match status" value="1"/>
</dbReference>
<dbReference type="SUPFAM" id="SSF118208">
    <property type="entry name" value="Viral ssDNA binding protein"/>
    <property type="match status" value="1"/>
</dbReference>
<keyword id="KW-0235">DNA replication</keyword>
<keyword id="KW-0238">DNA-binding</keyword>
<keyword id="KW-1048">Host nucleus</keyword>
<keyword id="KW-1185">Reference proteome</keyword>
<organismHost>
    <name type="scientific">Amazona oratrix</name>
    <name type="common">yellow-headed parrot</name>
    <dbReference type="NCBI Taxonomy" id="152276"/>
</organismHost>
<reference key="1">
    <citation type="journal article" date="2006" name="J. Virol.">
        <title>Psittacid herpesvirus 1 and infectious laryngotracheitis virus: Comparative genome sequence analysis of two avian alphaherpesviruses.</title>
        <authorList>
            <person name="Thureen D.R."/>
            <person name="Keeler C.L. Jr."/>
        </authorList>
    </citation>
    <scope>NUCLEOTIDE SEQUENCE [LARGE SCALE GENOMIC DNA]</scope>
</reference>
<evidence type="ECO:0000255" key="1">
    <source>
        <dbReference type="HAMAP-Rule" id="MF_04007"/>
    </source>
</evidence>
<evidence type="ECO:0000256" key="2">
    <source>
        <dbReference type="SAM" id="MobiDB-lite"/>
    </source>
</evidence>
<organism>
    <name type="scientific">Psittacid herpesvirus 1 (isolate Amazon parrot/-/97-0001/1997)</name>
    <name type="common">PsHV-1</name>
    <name type="synonym">Pacheco's disease virus</name>
    <dbReference type="NCBI Taxonomy" id="670426"/>
    <lineage>
        <taxon>Viruses</taxon>
        <taxon>Duplodnaviria</taxon>
        <taxon>Heunggongvirae</taxon>
        <taxon>Peploviricota</taxon>
        <taxon>Herviviricetes</taxon>
        <taxon>Herpesvirales</taxon>
        <taxon>Orthoherpesviridae</taxon>
        <taxon>Alphaherpesvirinae</taxon>
        <taxon>Iltovirus</taxon>
        <taxon>Iltovirus psittacidalpha1</taxon>
        <taxon>Psittacid alphaherpesvirus 1</taxon>
    </lineage>
</organism>